<keyword id="KW-0004">4Fe-4S</keyword>
<keyword id="KW-0963">Cytoplasm</keyword>
<keyword id="KW-0408">Iron</keyword>
<keyword id="KW-0411">Iron-sulfur</keyword>
<keyword id="KW-0479">Metal-binding</keyword>
<keyword id="KW-1185">Reference proteome</keyword>
<keyword id="KW-0949">S-adenosyl-L-methionine</keyword>
<keyword id="KW-0808">Transferase</keyword>
<keyword id="KW-0819">tRNA processing</keyword>
<accession>A4T007</accession>
<evidence type="ECO:0000255" key="1">
    <source>
        <dbReference type="HAMAP-Rule" id="MF_01864"/>
    </source>
</evidence>
<evidence type="ECO:0000255" key="2">
    <source>
        <dbReference type="PROSITE-ProRule" id="PRU01266"/>
    </source>
</evidence>
<comment type="function">
    <text evidence="1">Catalyzes the methylthiolation of N6-(dimethylallyl)adenosine (i(6)A), leading to the formation of 2-methylthio-N6-(dimethylallyl)adenosine (ms(2)i(6)A) at position 37 in tRNAs that read codons beginning with uridine.</text>
</comment>
<comment type="catalytic activity">
    <reaction evidence="1">
        <text>N(6)-dimethylallyladenosine(37) in tRNA + (sulfur carrier)-SH + AH2 + 2 S-adenosyl-L-methionine = 2-methylsulfanyl-N(6)-dimethylallyladenosine(37) in tRNA + (sulfur carrier)-H + 5'-deoxyadenosine + L-methionine + A + S-adenosyl-L-homocysteine + 2 H(+)</text>
        <dbReference type="Rhea" id="RHEA:37067"/>
        <dbReference type="Rhea" id="RHEA-COMP:10375"/>
        <dbReference type="Rhea" id="RHEA-COMP:10376"/>
        <dbReference type="Rhea" id="RHEA-COMP:14737"/>
        <dbReference type="Rhea" id="RHEA-COMP:14739"/>
        <dbReference type="ChEBI" id="CHEBI:13193"/>
        <dbReference type="ChEBI" id="CHEBI:15378"/>
        <dbReference type="ChEBI" id="CHEBI:17319"/>
        <dbReference type="ChEBI" id="CHEBI:17499"/>
        <dbReference type="ChEBI" id="CHEBI:29917"/>
        <dbReference type="ChEBI" id="CHEBI:57844"/>
        <dbReference type="ChEBI" id="CHEBI:57856"/>
        <dbReference type="ChEBI" id="CHEBI:59789"/>
        <dbReference type="ChEBI" id="CHEBI:64428"/>
        <dbReference type="ChEBI" id="CHEBI:74415"/>
        <dbReference type="ChEBI" id="CHEBI:74417"/>
        <dbReference type="EC" id="2.8.4.3"/>
    </reaction>
</comment>
<comment type="cofactor">
    <cofactor evidence="1">
        <name>[4Fe-4S] cluster</name>
        <dbReference type="ChEBI" id="CHEBI:49883"/>
    </cofactor>
    <text evidence="1">Binds 2 [4Fe-4S] clusters. One cluster is coordinated with 3 cysteines and an exchangeable S-adenosyl-L-methionine.</text>
</comment>
<comment type="subunit">
    <text evidence="1">Monomer.</text>
</comment>
<comment type="subcellular location">
    <subcellularLocation>
        <location evidence="1">Cytoplasm</location>
    </subcellularLocation>
</comment>
<comment type="similarity">
    <text evidence="1">Belongs to the methylthiotransferase family. MiaB subfamily.</text>
</comment>
<protein>
    <recommendedName>
        <fullName evidence="1">tRNA-2-methylthio-N(6)-dimethylallyladenosine synthase</fullName>
        <ecNumber evidence="1">2.8.4.3</ecNumber>
    </recommendedName>
    <alternativeName>
        <fullName evidence="1">(Dimethylallyl)adenosine tRNA methylthiotransferase MiaB</fullName>
    </alternativeName>
    <alternativeName>
        <fullName evidence="1">tRNA-i(6)A37 methylthiotransferase</fullName>
    </alternativeName>
</protein>
<reference key="1">
    <citation type="journal article" date="2012" name="Stand. Genomic Sci.">
        <title>Complete genome sequence of Polynucleobacter necessarius subsp. asymbioticus type strain (QLW-P1DMWA-1(T)).</title>
        <authorList>
            <person name="Meincke L."/>
            <person name="Copeland A."/>
            <person name="Lapidus A."/>
            <person name="Lucas S."/>
            <person name="Berry K.W."/>
            <person name="Del Rio T.G."/>
            <person name="Hammon N."/>
            <person name="Dalin E."/>
            <person name="Tice H."/>
            <person name="Pitluck S."/>
            <person name="Richardson P."/>
            <person name="Bruce D."/>
            <person name="Goodwin L."/>
            <person name="Han C."/>
            <person name="Tapia R."/>
            <person name="Detter J.C."/>
            <person name="Schmutz J."/>
            <person name="Brettin T."/>
            <person name="Larimer F."/>
            <person name="Land M."/>
            <person name="Hauser L."/>
            <person name="Kyrpides N.C."/>
            <person name="Ivanova N."/>
            <person name="Goker M."/>
            <person name="Woyke T."/>
            <person name="Wu Q.L."/>
            <person name="Pockl M."/>
            <person name="Hahn M.W."/>
            <person name="Klenk H.P."/>
        </authorList>
    </citation>
    <scope>NUCLEOTIDE SEQUENCE [LARGE SCALE GENOMIC DNA]</scope>
    <source>
        <strain>DSM 18221 / CIP 109841 / QLW-P1DMWA-1</strain>
    </source>
</reference>
<proteinExistence type="inferred from homology"/>
<organism>
    <name type="scientific">Polynucleobacter asymbioticus (strain DSM 18221 / CIP 109841 / QLW-P1DMWA-1)</name>
    <name type="common">Polynucleobacter necessarius subsp. asymbioticus</name>
    <dbReference type="NCBI Taxonomy" id="312153"/>
    <lineage>
        <taxon>Bacteria</taxon>
        <taxon>Pseudomonadati</taxon>
        <taxon>Pseudomonadota</taxon>
        <taxon>Betaproteobacteria</taxon>
        <taxon>Burkholderiales</taxon>
        <taxon>Burkholderiaceae</taxon>
        <taxon>Polynucleobacter</taxon>
    </lineage>
</organism>
<dbReference type="EC" id="2.8.4.3" evidence="1"/>
<dbReference type="EMBL" id="CP000655">
    <property type="protein sequence ID" value="ABP35071.1"/>
    <property type="molecule type" value="Genomic_DNA"/>
</dbReference>
<dbReference type="RefSeq" id="WP_011903694.1">
    <property type="nucleotide sequence ID" value="NC_009379.1"/>
</dbReference>
<dbReference type="SMR" id="A4T007"/>
<dbReference type="GeneID" id="31482249"/>
<dbReference type="KEGG" id="pnu:Pnuc_1859"/>
<dbReference type="eggNOG" id="COG0621">
    <property type="taxonomic scope" value="Bacteria"/>
</dbReference>
<dbReference type="HOGENOM" id="CLU_018697_2_0_4"/>
<dbReference type="Proteomes" id="UP000000231">
    <property type="component" value="Chromosome"/>
</dbReference>
<dbReference type="GO" id="GO:0005829">
    <property type="term" value="C:cytosol"/>
    <property type="evidence" value="ECO:0007669"/>
    <property type="project" value="TreeGrafter"/>
</dbReference>
<dbReference type="GO" id="GO:0051539">
    <property type="term" value="F:4 iron, 4 sulfur cluster binding"/>
    <property type="evidence" value="ECO:0007669"/>
    <property type="project" value="UniProtKB-UniRule"/>
</dbReference>
<dbReference type="GO" id="GO:0046872">
    <property type="term" value="F:metal ion binding"/>
    <property type="evidence" value="ECO:0007669"/>
    <property type="project" value="UniProtKB-KW"/>
</dbReference>
<dbReference type="GO" id="GO:0035597">
    <property type="term" value="F:N6-isopentenyladenosine methylthiotransferase activity"/>
    <property type="evidence" value="ECO:0007669"/>
    <property type="project" value="TreeGrafter"/>
</dbReference>
<dbReference type="CDD" id="cd01335">
    <property type="entry name" value="Radical_SAM"/>
    <property type="match status" value="1"/>
</dbReference>
<dbReference type="FunFam" id="3.40.50.12160:FF:000001">
    <property type="entry name" value="tRNA-2-methylthio-N(6)-dimethylallyladenosine synthase"/>
    <property type="match status" value="1"/>
</dbReference>
<dbReference type="FunFam" id="3.80.30.20:FF:000001">
    <property type="entry name" value="tRNA-2-methylthio-N(6)-dimethylallyladenosine synthase 2"/>
    <property type="match status" value="1"/>
</dbReference>
<dbReference type="Gene3D" id="3.40.50.12160">
    <property type="entry name" value="Methylthiotransferase, N-terminal domain"/>
    <property type="match status" value="1"/>
</dbReference>
<dbReference type="Gene3D" id="3.80.30.20">
    <property type="entry name" value="tm_1862 like domain"/>
    <property type="match status" value="1"/>
</dbReference>
<dbReference type="HAMAP" id="MF_01864">
    <property type="entry name" value="tRNA_metthiotr_MiaB"/>
    <property type="match status" value="1"/>
</dbReference>
<dbReference type="InterPro" id="IPR006638">
    <property type="entry name" value="Elp3/MiaA/NifB-like_rSAM"/>
</dbReference>
<dbReference type="InterPro" id="IPR005839">
    <property type="entry name" value="Methylthiotransferase"/>
</dbReference>
<dbReference type="InterPro" id="IPR020612">
    <property type="entry name" value="Methylthiotransferase_CS"/>
</dbReference>
<dbReference type="InterPro" id="IPR013848">
    <property type="entry name" value="Methylthiotransferase_N"/>
</dbReference>
<dbReference type="InterPro" id="IPR038135">
    <property type="entry name" value="Methylthiotransferase_N_sf"/>
</dbReference>
<dbReference type="InterPro" id="IPR006463">
    <property type="entry name" value="MiaB_methiolase"/>
</dbReference>
<dbReference type="InterPro" id="IPR007197">
    <property type="entry name" value="rSAM"/>
</dbReference>
<dbReference type="InterPro" id="IPR023404">
    <property type="entry name" value="rSAM_horseshoe"/>
</dbReference>
<dbReference type="InterPro" id="IPR002792">
    <property type="entry name" value="TRAM_dom"/>
</dbReference>
<dbReference type="NCBIfam" id="TIGR01574">
    <property type="entry name" value="miaB-methiolase"/>
    <property type="match status" value="1"/>
</dbReference>
<dbReference type="NCBIfam" id="TIGR00089">
    <property type="entry name" value="MiaB/RimO family radical SAM methylthiotransferase"/>
    <property type="match status" value="1"/>
</dbReference>
<dbReference type="PANTHER" id="PTHR43020">
    <property type="entry name" value="CDK5 REGULATORY SUBUNIT-ASSOCIATED PROTEIN 1"/>
    <property type="match status" value="1"/>
</dbReference>
<dbReference type="PANTHER" id="PTHR43020:SF2">
    <property type="entry name" value="MITOCHONDRIAL TRNA METHYLTHIOTRANSFERASE CDK5RAP1"/>
    <property type="match status" value="1"/>
</dbReference>
<dbReference type="Pfam" id="PF04055">
    <property type="entry name" value="Radical_SAM"/>
    <property type="match status" value="1"/>
</dbReference>
<dbReference type="Pfam" id="PF01938">
    <property type="entry name" value="TRAM"/>
    <property type="match status" value="1"/>
</dbReference>
<dbReference type="Pfam" id="PF00919">
    <property type="entry name" value="UPF0004"/>
    <property type="match status" value="1"/>
</dbReference>
<dbReference type="SFLD" id="SFLDF00273">
    <property type="entry name" value="(dimethylallyl)adenosine_tRNA"/>
    <property type="match status" value="1"/>
</dbReference>
<dbReference type="SFLD" id="SFLDG01082">
    <property type="entry name" value="B12-binding_domain_containing"/>
    <property type="match status" value="1"/>
</dbReference>
<dbReference type="SFLD" id="SFLDS00029">
    <property type="entry name" value="Radical_SAM"/>
    <property type="match status" value="1"/>
</dbReference>
<dbReference type="SMART" id="SM00729">
    <property type="entry name" value="Elp3"/>
    <property type="match status" value="1"/>
</dbReference>
<dbReference type="SUPFAM" id="SSF102114">
    <property type="entry name" value="Radical SAM enzymes"/>
    <property type="match status" value="1"/>
</dbReference>
<dbReference type="PROSITE" id="PS51449">
    <property type="entry name" value="MTTASE_N"/>
    <property type="match status" value="1"/>
</dbReference>
<dbReference type="PROSITE" id="PS01278">
    <property type="entry name" value="MTTASE_RADICAL"/>
    <property type="match status" value="1"/>
</dbReference>
<dbReference type="PROSITE" id="PS51918">
    <property type="entry name" value="RADICAL_SAM"/>
    <property type="match status" value="1"/>
</dbReference>
<dbReference type="PROSITE" id="PS50926">
    <property type="entry name" value="TRAM"/>
    <property type="match status" value="1"/>
</dbReference>
<name>MIAB_POLAQ</name>
<gene>
    <name evidence="1" type="primary">miaB</name>
    <name type="ordered locus">Pnuc_1859</name>
</gene>
<feature type="chain" id="PRO_0000374440" description="tRNA-2-methylthio-N(6)-dimethylallyladenosine synthase">
    <location>
        <begin position="1"/>
        <end position="448"/>
    </location>
</feature>
<feature type="domain" description="MTTase N-terminal" evidence="1">
    <location>
        <begin position="2"/>
        <end position="119"/>
    </location>
</feature>
<feature type="domain" description="Radical SAM core" evidence="2">
    <location>
        <begin position="142"/>
        <end position="375"/>
    </location>
</feature>
<feature type="domain" description="TRAM" evidence="1">
    <location>
        <begin position="378"/>
        <end position="444"/>
    </location>
</feature>
<feature type="binding site" evidence="1">
    <location>
        <position position="11"/>
    </location>
    <ligand>
        <name>[4Fe-4S] cluster</name>
        <dbReference type="ChEBI" id="CHEBI:49883"/>
        <label>1</label>
    </ligand>
</feature>
<feature type="binding site" evidence="1">
    <location>
        <position position="48"/>
    </location>
    <ligand>
        <name>[4Fe-4S] cluster</name>
        <dbReference type="ChEBI" id="CHEBI:49883"/>
        <label>1</label>
    </ligand>
</feature>
<feature type="binding site" evidence="1">
    <location>
        <position position="82"/>
    </location>
    <ligand>
        <name>[4Fe-4S] cluster</name>
        <dbReference type="ChEBI" id="CHEBI:49883"/>
        <label>1</label>
    </ligand>
</feature>
<feature type="binding site" evidence="1">
    <location>
        <position position="156"/>
    </location>
    <ligand>
        <name>[4Fe-4S] cluster</name>
        <dbReference type="ChEBI" id="CHEBI:49883"/>
        <label>2</label>
        <note>4Fe-4S-S-AdoMet</note>
    </ligand>
</feature>
<feature type="binding site" evidence="1">
    <location>
        <position position="160"/>
    </location>
    <ligand>
        <name>[4Fe-4S] cluster</name>
        <dbReference type="ChEBI" id="CHEBI:49883"/>
        <label>2</label>
        <note>4Fe-4S-S-AdoMet</note>
    </ligand>
</feature>
<feature type="binding site" evidence="1">
    <location>
        <position position="163"/>
    </location>
    <ligand>
        <name>[4Fe-4S] cluster</name>
        <dbReference type="ChEBI" id="CHEBI:49883"/>
        <label>2</label>
        <note>4Fe-4S-S-AdoMet</note>
    </ligand>
</feature>
<sequence>MKKLYIKTFGCQMNEYDSGKMADLLHADEGMVMTDTPEDADVVLLNTCSIREKAEDKVFSDLGRLRELKKTKPHMLIGVGGCVASQEGRQIVSRAPYVDVVFGPQTLHRLSDLIAQRRKTGLSQVDISFPEIEKFDHLPASRQTRGSAYVSIMEGCSKYCSYCVVPYTRGEEVSRPFDDVLTEVAGLASKGVKEIVLLGQNVNAYLGKMGDAEEIADFALLIEYIAEIPGVERIRFTTSHPKEFTQRLIDVYAKVPKLVSHLHLPVQHGSDSILSAMKRGYTALEYKSIIRKMRAVRPDLTLSSDFIVGFPGETDADFEKLLKMVQELDFDNSFCFIFSPRPGTPAANLSDDTPYEVKLKRLQTLLALIEGQSNQISQKMLGKTERVLIEGLAKDGVNLQGRAENNRVIHFSPPDQNIDGLIGEMVDIRITEVLNYTLRGELVETHVI</sequence>